<comment type="similarity">
    <text evidence="1 2">Belongs to the jacalin lectin family.</text>
</comment>
<feature type="chain" id="PRO_0000430387" description="Jacalin-related lectin 19">
    <location>
        <begin position="1"/>
        <end position="176"/>
    </location>
</feature>
<feature type="domain" description="Jacalin-type lectin" evidence="1">
    <location>
        <begin position="12"/>
        <end position="154"/>
    </location>
</feature>
<evidence type="ECO:0000255" key="1">
    <source>
        <dbReference type="PROSITE-ProRule" id="PRU01088"/>
    </source>
</evidence>
<evidence type="ECO:0000305" key="2"/>
<proteinExistence type="evidence at transcript level"/>
<accession>Q9SSM3</accession>
<organism>
    <name type="scientific">Arabidopsis thaliana</name>
    <name type="common">Mouse-ear cress</name>
    <dbReference type="NCBI Taxonomy" id="3702"/>
    <lineage>
        <taxon>Eukaryota</taxon>
        <taxon>Viridiplantae</taxon>
        <taxon>Streptophyta</taxon>
        <taxon>Embryophyta</taxon>
        <taxon>Tracheophyta</taxon>
        <taxon>Spermatophyta</taxon>
        <taxon>Magnoliopsida</taxon>
        <taxon>eudicotyledons</taxon>
        <taxon>Gunneridae</taxon>
        <taxon>Pentapetalae</taxon>
        <taxon>rosids</taxon>
        <taxon>malvids</taxon>
        <taxon>Brassicales</taxon>
        <taxon>Brassicaceae</taxon>
        <taxon>Camelineae</taxon>
        <taxon>Arabidopsis</taxon>
    </lineage>
</organism>
<reference key="1">
    <citation type="journal article" date="2000" name="Nature">
        <title>Sequence and analysis of chromosome 1 of the plant Arabidopsis thaliana.</title>
        <authorList>
            <person name="Theologis A."/>
            <person name="Ecker J.R."/>
            <person name="Palm C.J."/>
            <person name="Federspiel N.A."/>
            <person name="Kaul S."/>
            <person name="White O."/>
            <person name="Alonso J."/>
            <person name="Altafi H."/>
            <person name="Araujo R."/>
            <person name="Bowman C.L."/>
            <person name="Brooks S.Y."/>
            <person name="Buehler E."/>
            <person name="Chan A."/>
            <person name="Chao Q."/>
            <person name="Chen H."/>
            <person name="Cheuk R.F."/>
            <person name="Chin C.W."/>
            <person name="Chung M.K."/>
            <person name="Conn L."/>
            <person name="Conway A.B."/>
            <person name="Conway A.R."/>
            <person name="Creasy T.H."/>
            <person name="Dewar K."/>
            <person name="Dunn P."/>
            <person name="Etgu P."/>
            <person name="Feldblyum T.V."/>
            <person name="Feng J.-D."/>
            <person name="Fong B."/>
            <person name="Fujii C.Y."/>
            <person name="Gill J.E."/>
            <person name="Goldsmith A.D."/>
            <person name="Haas B."/>
            <person name="Hansen N.F."/>
            <person name="Hughes B."/>
            <person name="Huizar L."/>
            <person name="Hunter J.L."/>
            <person name="Jenkins J."/>
            <person name="Johnson-Hopson C."/>
            <person name="Khan S."/>
            <person name="Khaykin E."/>
            <person name="Kim C.J."/>
            <person name="Koo H.L."/>
            <person name="Kremenetskaia I."/>
            <person name="Kurtz D.B."/>
            <person name="Kwan A."/>
            <person name="Lam B."/>
            <person name="Langin-Hooper S."/>
            <person name="Lee A."/>
            <person name="Lee J.M."/>
            <person name="Lenz C.A."/>
            <person name="Li J.H."/>
            <person name="Li Y.-P."/>
            <person name="Lin X."/>
            <person name="Liu S.X."/>
            <person name="Liu Z.A."/>
            <person name="Luros J.S."/>
            <person name="Maiti R."/>
            <person name="Marziali A."/>
            <person name="Militscher J."/>
            <person name="Miranda M."/>
            <person name="Nguyen M."/>
            <person name="Nierman W.C."/>
            <person name="Osborne B.I."/>
            <person name="Pai G."/>
            <person name="Peterson J."/>
            <person name="Pham P.K."/>
            <person name="Rizzo M."/>
            <person name="Rooney T."/>
            <person name="Rowley D."/>
            <person name="Sakano H."/>
            <person name="Salzberg S.L."/>
            <person name="Schwartz J.R."/>
            <person name="Shinn P."/>
            <person name="Southwick A.M."/>
            <person name="Sun H."/>
            <person name="Tallon L.J."/>
            <person name="Tambunga G."/>
            <person name="Toriumi M.J."/>
            <person name="Town C.D."/>
            <person name="Utterback T."/>
            <person name="Van Aken S."/>
            <person name="Vaysberg M."/>
            <person name="Vysotskaia V.S."/>
            <person name="Walker M."/>
            <person name="Wu D."/>
            <person name="Yu G."/>
            <person name="Fraser C.M."/>
            <person name="Venter J.C."/>
            <person name="Davis R.W."/>
        </authorList>
    </citation>
    <scope>NUCLEOTIDE SEQUENCE [LARGE SCALE GENOMIC DNA]</scope>
    <source>
        <strain>cv. Columbia</strain>
    </source>
</reference>
<reference key="2">
    <citation type="journal article" date="2017" name="Plant J.">
        <title>Araport11: a complete reannotation of the Arabidopsis thaliana reference genome.</title>
        <authorList>
            <person name="Cheng C.Y."/>
            <person name="Krishnakumar V."/>
            <person name="Chan A.P."/>
            <person name="Thibaud-Nissen F."/>
            <person name="Schobel S."/>
            <person name="Town C.D."/>
        </authorList>
    </citation>
    <scope>GENOME REANNOTATION</scope>
    <source>
        <strain>cv. Columbia</strain>
    </source>
</reference>
<reference key="3">
    <citation type="submission" date="2005-03" db="EMBL/GenBank/DDBJ databases">
        <title>Arabidopsis cDNA clones.</title>
        <authorList>
            <person name="Shinn P."/>
            <person name="Chen H."/>
            <person name="Cheuk R."/>
            <person name="Kim C.J."/>
            <person name="Ecker J.R."/>
        </authorList>
    </citation>
    <scope>NUCLEOTIDE SEQUENCE [LARGE SCALE MRNA]</scope>
</reference>
<reference key="4">
    <citation type="submission" date="2007-06" db="EMBL/GenBank/DDBJ databases">
        <title>Arabidopsis ORF clones.</title>
        <authorList>
            <person name="Bautista-Mercan V.R."/>
            <person name="Kim C.J."/>
            <person name="Chen H."/>
            <person name="Quan R."/>
            <person name="De Los Reyes C."/>
            <person name="Ecker J.R."/>
        </authorList>
    </citation>
    <scope>NUCLEOTIDE SEQUENCE [LARGE SCALE MRNA]</scope>
</reference>
<reference key="5">
    <citation type="journal article" date="2008" name="Plant Cell Physiol.">
        <title>Antagonistic jacalin-related lectins regulate the size of ER body-type beta-glucosidase complexes in Arabidopsis thaliana.</title>
        <authorList>
            <person name="Nagano A.J."/>
            <person name="Fukao Y."/>
            <person name="Fujiwara M."/>
            <person name="Nishimura M."/>
            <person name="Hara-Nishimura I."/>
        </authorList>
    </citation>
    <scope>GENE FAMILY</scope>
    <scope>NOMENCLATURE</scope>
</reference>
<keyword id="KW-0430">Lectin</keyword>
<keyword id="KW-1185">Reference proteome</keyword>
<gene>
    <name type="primary">JAL19</name>
    <name type="ordered locus">At1g73040</name>
    <name type="ORF">F3N23.24</name>
</gene>
<name>JAL19_ARATH</name>
<protein>
    <recommendedName>
        <fullName>Jacalin-related lectin 19</fullName>
    </recommendedName>
</protein>
<sequence>MDQQQQGDKNLTVFVGPWGGNGGTTWDDGIYDGVREIRLVYDHCIDSISVIYDKNGKPAKSEKHGGVGGNKTSEIKLQYPEEYLTGVSGYYCPMVNSGTPVIRSMTFKSNKQVYGPYGVEQGTPFTFSVNGGRIVGMNGRSGWYLDSIGFHLSRPKSTKMINKLRKKIHWLTRIVA</sequence>
<dbReference type="EMBL" id="AC008017">
    <property type="protein sequence ID" value="AAD55651.1"/>
    <property type="molecule type" value="Genomic_DNA"/>
</dbReference>
<dbReference type="EMBL" id="CP002684">
    <property type="protein sequence ID" value="AEE35407.1"/>
    <property type="molecule type" value="Genomic_DNA"/>
</dbReference>
<dbReference type="EMBL" id="BT021916">
    <property type="protein sequence ID" value="AAX49365.1"/>
    <property type="molecule type" value="mRNA"/>
</dbReference>
<dbReference type="EMBL" id="BT030616">
    <property type="protein sequence ID" value="ABR46196.1"/>
    <property type="molecule type" value="mRNA"/>
</dbReference>
<dbReference type="PIR" id="H96755">
    <property type="entry name" value="H96755"/>
</dbReference>
<dbReference type="RefSeq" id="NP_001319369.1">
    <property type="nucleotide sequence ID" value="NM_001334562.1"/>
</dbReference>
<dbReference type="SMR" id="Q9SSM3"/>
<dbReference type="FunCoup" id="Q9SSM3">
    <property type="interactions" value="12"/>
</dbReference>
<dbReference type="STRING" id="3702.Q9SSM3"/>
<dbReference type="PaxDb" id="3702-AT1G73040.1"/>
<dbReference type="ProteomicsDB" id="238970"/>
<dbReference type="EnsemblPlants" id="AT1G73040.1">
    <property type="protein sequence ID" value="AT1G73040.1"/>
    <property type="gene ID" value="AT1G73040"/>
</dbReference>
<dbReference type="GeneID" id="843635"/>
<dbReference type="Gramene" id="AT1G73040.1">
    <property type="protein sequence ID" value="AT1G73040.1"/>
    <property type="gene ID" value="AT1G73040"/>
</dbReference>
<dbReference type="KEGG" id="ath:AT1G73040"/>
<dbReference type="Araport" id="AT1G73040"/>
<dbReference type="TAIR" id="AT1G73040"/>
<dbReference type="eggNOG" id="ENOG502RXU3">
    <property type="taxonomic scope" value="Eukaryota"/>
</dbReference>
<dbReference type="HOGENOM" id="CLU_078923_3_0_1"/>
<dbReference type="InParanoid" id="Q9SSM3"/>
<dbReference type="OMA" id="WFTRMVA"/>
<dbReference type="OrthoDB" id="1901752at2759"/>
<dbReference type="PhylomeDB" id="Q9SSM3"/>
<dbReference type="PRO" id="PR:Q9SSM3"/>
<dbReference type="Proteomes" id="UP000006548">
    <property type="component" value="Chromosome 1"/>
</dbReference>
<dbReference type="ExpressionAtlas" id="Q9SSM3">
    <property type="expression patterns" value="baseline and differential"/>
</dbReference>
<dbReference type="GO" id="GO:0030246">
    <property type="term" value="F:carbohydrate binding"/>
    <property type="evidence" value="ECO:0007669"/>
    <property type="project" value="UniProtKB-KW"/>
</dbReference>
<dbReference type="CDD" id="cd09612">
    <property type="entry name" value="Jacalin"/>
    <property type="match status" value="1"/>
</dbReference>
<dbReference type="FunFam" id="2.100.10.30:FF:000001">
    <property type="entry name" value="Jacalin-related lectin 33"/>
    <property type="match status" value="1"/>
</dbReference>
<dbReference type="Gene3D" id="2.100.10.30">
    <property type="entry name" value="Jacalin-like lectin domain"/>
    <property type="match status" value="1"/>
</dbReference>
<dbReference type="InterPro" id="IPR001229">
    <property type="entry name" value="Jacalin-like_lectin_dom"/>
</dbReference>
<dbReference type="InterPro" id="IPR033734">
    <property type="entry name" value="Jacalin-like_lectin_dom_plant"/>
</dbReference>
<dbReference type="InterPro" id="IPR036404">
    <property type="entry name" value="Jacalin-like_lectin_dom_sf"/>
</dbReference>
<dbReference type="PANTHER" id="PTHR47293:SF15">
    <property type="entry name" value="JACALIN-RELATED LECTIN 19"/>
    <property type="match status" value="1"/>
</dbReference>
<dbReference type="PANTHER" id="PTHR47293">
    <property type="entry name" value="JACALIN-RELATED LECTIN 3"/>
    <property type="match status" value="1"/>
</dbReference>
<dbReference type="Pfam" id="PF01419">
    <property type="entry name" value="Jacalin"/>
    <property type="match status" value="1"/>
</dbReference>
<dbReference type="SMART" id="SM00915">
    <property type="entry name" value="Jacalin"/>
    <property type="match status" value="1"/>
</dbReference>
<dbReference type="SUPFAM" id="SSF51101">
    <property type="entry name" value="Mannose-binding lectins"/>
    <property type="match status" value="1"/>
</dbReference>
<dbReference type="PROSITE" id="PS51752">
    <property type="entry name" value="JACALIN_LECTIN"/>
    <property type="match status" value="1"/>
</dbReference>